<evidence type="ECO:0000255" key="1">
    <source>
        <dbReference type="HAMAP-Rule" id="MF_01145"/>
    </source>
</evidence>
<evidence type="ECO:0007829" key="2">
    <source>
        <dbReference type="PDB" id="5TVL"/>
    </source>
</evidence>
<accession>B1IBE1</accession>
<reference key="1">
    <citation type="journal article" date="2010" name="Genome Biol.">
        <title>Structure and dynamics of the pan-genome of Streptococcus pneumoniae and closely related species.</title>
        <authorList>
            <person name="Donati C."/>
            <person name="Hiller N.L."/>
            <person name="Tettelin H."/>
            <person name="Muzzi A."/>
            <person name="Croucher N.J."/>
            <person name="Angiuoli S.V."/>
            <person name="Oggioni M."/>
            <person name="Dunning Hotopp J.C."/>
            <person name="Hu F.Z."/>
            <person name="Riley D.R."/>
            <person name="Covacci A."/>
            <person name="Mitchell T.J."/>
            <person name="Bentley S.D."/>
            <person name="Kilian M."/>
            <person name="Ehrlich G.D."/>
            <person name="Rappuoli R."/>
            <person name="Moxon E.R."/>
            <person name="Masignani V."/>
        </authorList>
    </citation>
    <scope>NUCLEOTIDE SEQUENCE [LARGE SCALE GENOMIC DNA]</scope>
    <source>
        <strain>Hungary19A-6</strain>
    </source>
</reference>
<organism>
    <name type="scientific">Streptococcus pneumoniae (strain Hungary19A-6)</name>
    <dbReference type="NCBI Taxonomy" id="487214"/>
    <lineage>
        <taxon>Bacteria</taxon>
        <taxon>Bacillati</taxon>
        <taxon>Bacillota</taxon>
        <taxon>Bacilli</taxon>
        <taxon>Lactobacillales</taxon>
        <taxon>Streptococcaceae</taxon>
        <taxon>Streptococcus</taxon>
    </lineage>
</organism>
<protein>
    <recommendedName>
        <fullName evidence="1">Foldase protein PrsA</fullName>
        <ecNumber evidence="1">5.2.1.8</ecNumber>
    </recommendedName>
</protein>
<sequence>MKKKLLAGAITLLSVATLAACSKGSEGADLISMKGDVITEHQFYEQVKNNPSAQQVLLNMTIQKVFEKQYGSELDDKEVDDTIAEEKKQYGENYQRVLSQAGMTLETRKAQIRTSKLVELAVKKVAEAELTDEAYKKAFDEYTPDVTAQIIRLNNEDKAKEVLEKAKAEGADFAQLAKDNSTDEKTKENGGEITFDSASTEVPEQVKKAAFALDVDGVSDVITATGTQAYSSQYYIVKLTKKTEKSSNIDDYKEKLKTVILTQKQNDSTFVQSIIGKELQAANIKVKDQAFQNIFTQYIGGGDSSSSSSTSNE</sequence>
<keyword id="KW-0002">3D-structure</keyword>
<keyword id="KW-1003">Cell membrane</keyword>
<keyword id="KW-0413">Isomerase</keyword>
<keyword id="KW-0449">Lipoprotein</keyword>
<keyword id="KW-0472">Membrane</keyword>
<keyword id="KW-0564">Palmitate</keyword>
<keyword id="KW-0697">Rotamase</keyword>
<keyword id="KW-0732">Signal</keyword>
<feature type="signal peptide" evidence="1">
    <location>
        <begin position="1"/>
        <end position="20"/>
    </location>
</feature>
<feature type="chain" id="PRO_1000137386" description="Foldase protein PrsA">
    <location>
        <begin position="21"/>
        <end position="313"/>
    </location>
</feature>
<feature type="domain" description="PpiC" evidence="1">
    <location>
        <begin position="143"/>
        <end position="241"/>
    </location>
</feature>
<feature type="lipid moiety-binding region" description="N-palmitoyl cysteine" evidence="1">
    <location>
        <position position="21"/>
    </location>
</feature>
<feature type="lipid moiety-binding region" description="S-diacylglycerol cysteine" evidence="1">
    <location>
        <position position="21"/>
    </location>
</feature>
<feature type="strand" evidence="2">
    <location>
        <begin position="29"/>
        <end position="33"/>
    </location>
</feature>
<feature type="strand" evidence="2">
    <location>
        <begin position="36"/>
        <end position="39"/>
    </location>
</feature>
<feature type="helix" evidence="2">
    <location>
        <begin position="40"/>
        <end position="47"/>
    </location>
</feature>
<feature type="helix" evidence="2">
    <location>
        <begin position="51"/>
        <end position="70"/>
    </location>
</feature>
<feature type="helix" evidence="2">
    <location>
        <begin position="71"/>
        <end position="73"/>
    </location>
</feature>
<feature type="helix" evidence="2">
    <location>
        <begin position="76"/>
        <end position="90"/>
    </location>
</feature>
<feature type="helix" evidence="2">
    <location>
        <begin position="91"/>
        <end position="93"/>
    </location>
</feature>
<feature type="helix" evidence="2">
    <location>
        <begin position="94"/>
        <end position="100"/>
    </location>
</feature>
<feature type="helix" evidence="2">
    <location>
        <begin position="105"/>
        <end position="128"/>
    </location>
</feature>
<feature type="helix" evidence="2">
    <location>
        <begin position="132"/>
        <end position="141"/>
    </location>
</feature>
<feature type="strand" evidence="2">
    <location>
        <begin position="146"/>
        <end position="154"/>
    </location>
</feature>
<feature type="helix" evidence="2">
    <location>
        <begin position="156"/>
        <end position="165"/>
    </location>
</feature>
<feature type="helix" evidence="2">
    <location>
        <begin position="173"/>
        <end position="180"/>
    </location>
</feature>
<feature type="helix" evidence="2">
    <location>
        <begin position="184"/>
        <end position="187"/>
    </location>
</feature>
<feature type="turn" evidence="2">
    <location>
        <begin position="188"/>
        <end position="191"/>
    </location>
</feature>
<feature type="strand" evidence="2">
    <location>
        <begin position="192"/>
        <end position="195"/>
    </location>
</feature>
<feature type="strand" evidence="2">
    <location>
        <begin position="200"/>
        <end position="202"/>
    </location>
</feature>
<feature type="helix" evidence="2">
    <location>
        <begin position="204"/>
        <end position="212"/>
    </location>
</feature>
<feature type="strand" evidence="2">
    <location>
        <begin position="222"/>
        <end position="224"/>
    </location>
</feature>
<feature type="strand" evidence="2">
    <location>
        <begin position="228"/>
        <end position="230"/>
    </location>
</feature>
<feature type="strand" evidence="2">
    <location>
        <begin position="233"/>
        <end position="242"/>
    </location>
</feature>
<feature type="helix" evidence="2">
    <location>
        <begin position="249"/>
        <end position="251"/>
    </location>
</feature>
<feature type="helix" evidence="2">
    <location>
        <begin position="253"/>
        <end position="265"/>
    </location>
</feature>
<feature type="helix" evidence="2">
    <location>
        <begin position="268"/>
        <end position="281"/>
    </location>
</feature>
<feature type="helix" evidence="2">
    <location>
        <begin position="289"/>
        <end position="291"/>
    </location>
</feature>
<feature type="helix" evidence="2">
    <location>
        <begin position="292"/>
        <end position="296"/>
    </location>
</feature>
<dbReference type="EC" id="5.2.1.8" evidence="1"/>
<dbReference type="EMBL" id="CP000936">
    <property type="protein sequence ID" value="ACA37287.1"/>
    <property type="molecule type" value="Genomic_DNA"/>
</dbReference>
<dbReference type="RefSeq" id="WP_000727935.1">
    <property type="nucleotide sequence ID" value="NC_010380.1"/>
</dbReference>
<dbReference type="PDB" id="5TVL">
    <property type="method" value="X-ray"/>
    <property type="resolution" value="2.55 A"/>
    <property type="chains" value="A/B/C/D=27-313"/>
</dbReference>
<dbReference type="PDBsum" id="5TVL"/>
<dbReference type="SMR" id="B1IBE1"/>
<dbReference type="KEGG" id="spv:SPH_1082"/>
<dbReference type="HOGENOM" id="CLU_034646_6_0_9"/>
<dbReference type="Proteomes" id="UP000002163">
    <property type="component" value="Chromosome"/>
</dbReference>
<dbReference type="GO" id="GO:0005886">
    <property type="term" value="C:plasma membrane"/>
    <property type="evidence" value="ECO:0007669"/>
    <property type="project" value="UniProtKB-SubCell"/>
</dbReference>
<dbReference type="GO" id="GO:0003755">
    <property type="term" value="F:peptidyl-prolyl cis-trans isomerase activity"/>
    <property type="evidence" value="ECO:0007669"/>
    <property type="project" value="UniProtKB-UniRule"/>
</dbReference>
<dbReference type="GO" id="GO:0006457">
    <property type="term" value="P:protein folding"/>
    <property type="evidence" value="ECO:0007669"/>
    <property type="project" value="UniProtKB-UniRule"/>
</dbReference>
<dbReference type="Gene3D" id="3.10.50.40">
    <property type="match status" value="1"/>
</dbReference>
<dbReference type="HAMAP" id="MF_01145">
    <property type="entry name" value="Foldase_PrsA"/>
    <property type="match status" value="1"/>
</dbReference>
<dbReference type="InterPro" id="IPR023059">
    <property type="entry name" value="Foldase_PrsA"/>
</dbReference>
<dbReference type="InterPro" id="IPR046357">
    <property type="entry name" value="PPIase_dom_sf"/>
</dbReference>
<dbReference type="InterPro" id="IPR000297">
    <property type="entry name" value="PPIase_PpiC"/>
</dbReference>
<dbReference type="InterPro" id="IPR050245">
    <property type="entry name" value="PrsA_foldase"/>
</dbReference>
<dbReference type="InterPro" id="IPR027304">
    <property type="entry name" value="Trigger_fact/SurA_dom_sf"/>
</dbReference>
<dbReference type="NCBIfam" id="NF002361">
    <property type="entry name" value="PRK01326.1"/>
    <property type="match status" value="1"/>
</dbReference>
<dbReference type="PANTHER" id="PTHR47245:SF1">
    <property type="entry name" value="FOLDASE PROTEIN PRSA"/>
    <property type="match status" value="1"/>
</dbReference>
<dbReference type="PANTHER" id="PTHR47245">
    <property type="entry name" value="PEPTIDYLPROLYL ISOMERASE"/>
    <property type="match status" value="1"/>
</dbReference>
<dbReference type="Pfam" id="PF00639">
    <property type="entry name" value="Rotamase"/>
    <property type="match status" value="1"/>
</dbReference>
<dbReference type="SUPFAM" id="SSF54534">
    <property type="entry name" value="FKBP-like"/>
    <property type="match status" value="1"/>
</dbReference>
<dbReference type="SUPFAM" id="SSF109998">
    <property type="entry name" value="Triger factor/SurA peptide-binding domain-like"/>
    <property type="match status" value="1"/>
</dbReference>
<dbReference type="PROSITE" id="PS50198">
    <property type="entry name" value="PPIC_PPIASE_2"/>
    <property type="match status" value="1"/>
</dbReference>
<dbReference type="PROSITE" id="PS51257">
    <property type="entry name" value="PROKAR_LIPOPROTEIN"/>
    <property type="match status" value="1"/>
</dbReference>
<gene>
    <name evidence="1" type="primary">prsA</name>
    <name type="ordered locus">SPH_1082</name>
</gene>
<name>PRSA_STRPI</name>
<comment type="function">
    <text evidence="1">Plays a major role in protein secretion by helping the post-translocational extracellular folding of several secreted proteins.</text>
</comment>
<comment type="catalytic activity">
    <reaction evidence="1">
        <text>[protein]-peptidylproline (omega=180) = [protein]-peptidylproline (omega=0)</text>
        <dbReference type="Rhea" id="RHEA:16237"/>
        <dbReference type="Rhea" id="RHEA-COMP:10747"/>
        <dbReference type="Rhea" id="RHEA-COMP:10748"/>
        <dbReference type="ChEBI" id="CHEBI:83833"/>
        <dbReference type="ChEBI" id="CHEBI:83834"/>
        <dbReference type="EC" id="5.2.1.8"/>
    </reaction>
</comment>
<comment type="subcellular location">
    <subcellularLocation>
        <location evidence="1">Cell membrane</location>
        <topology evidence="1">Lipid-anchor</topology>
    </subcellularLocation>
</comment>
<comment type="similarity">
    <text evidence="1">Belongs to the PrsA family.</text>
</comment>
<proteinExistence type="evidence at protein level"/>